<sequence length="707" mass="80168">MMRNLAQQVGLFVCRISSGTSAWNSVISASYFSAGITRYSRSTVYRGYKAWQNLLDSEKRRWQRACAKYQGLVTSLEKRLCDMHQSYSTGDEKGMIIYEDYIYFQDNGCICRYKPNTGEDSLEVLLISEDLGLGDYEIQKIRVSPKQKFMAVTLKGYEREESTCVVVKLDNGPQVTHCIENVFSCEWATDRMLLHTSQVNVQCRQVFATDFSDANGAAQLVYTENDPRFFVDLYCTRDKRFITINSNSKSTSEVRLIDNRCPFEPPVLVQKRIAGVIYYIEHSNGCLYMLRRHGEAAEYKILKAAVSSGMKHWEPVYEVQERTKLVDMEMLKDHCLLFLKNHNQLSLEVIGLPSGAVLQSIKLPAWACALELDHQAEYGAGTVGFSLSSPVHPPVHFEYSLRKKQLSVDTNHSSDGIHQFHTLRLEAKSKDGTSVPLTLLYKDSEKQMRQRPLLIHVYGAYGMDLNMSFKVEKRMLVEEGWLLAYCHVRGGGELGCNWHSEGVLDKKLNGLEDLGSCISHLHGLGYSQPHYSAVEAASAGGVLAGALCNSAPRLFRAVVLEAPFLDVLNTMMNVSLPLTIEEQEEWGNPLSDEKYHRYIKSYCPYQNITPQNYPCVRITAYENDQRVPIQGLLGYITRLRKAARDYCHESGTSESRIPHIYLDVHPGGSHCDSLSWEESLRKVATQLAFLHMELKLDIPRRCKGSTQ</sequence>
<keyword id="KW-0963">Cytoplasm</keyword>
<keyword id="KW-0378">Hydrolase</keyword>
<keyword id="KW-0645">Protease</keyword>
<keyword id="KW-1185">Reference proteome</keyword>
<keyword id="KW-0720">Serine protease</keyword>
<organism>
    <name type="scientific">Xenopus laevis</name>
    <name type="common">African clawed frog</name>
    <dbReference type="NCBI Taxonomy" id="8355"/>
    <lineage>
        <taxon>Eukaryota</taxon>
        <taxon>Metazoa</taxon>
        <taxon>Chordata</taxon>
        <taxon>Craniata</taxon>
        <taxon>Vertebrata</taxon>
        <taxon>Euteleostomi</taxon>
        <taxon>Amphibia</taxon>
        <taxon>Batrachia</taxon>
        <taxon>Anura</taxon>
        <taxon>Pipoidea</taxon>
        <taxon>Pipidae</taxon>
        <taxon>Xenopodinae</taxon>
        <taxon>Xenopus</taxon>
        <taxon>Xenopus</taxon>
    </lineage>
</organism>
<dbReference type="EC" id="3.4.21.-" evidence="2"/>
<dbReference type="EMBL" id="BC108840">
    <property type="protein sequence ID" value="AAI08841.1"/>
    <property type="molecule type" value="mRNA"/>
</dbReference>
<dbReference type="RefSeq" id="NP_001167499.1">
    <property type="nucleotide sequence ID" value="NM_001174028.1"/>
</dbReference>
<dbReference type="SMR" id="Q32N48"/>
<dbReference type="ESTHER" id="xenla-q32n48">
    <property type="family name" value="S9N_PREPL_Peptidase_S9"/>
</dbReference>
<dbReference type="MEROPS" id="S09.015"/>
<dbReference type="DNASU" id="100381109"/>
<dbReference type="GeneID" id="100381109"/>
<dbReference type="KEGG" id="xla:100381109"/>
<dbReference type="AGR" id="Xenbase:XB-GENE-6466521"/>
<dbReference type="CTD" id="100381109"/>
<dbReference type="Xenbase" id="XB-GENE-6466521">
    <property type="gene designation" value="prepl.L"/>
</dbReference>
<dbReference type="OrthoDB" id="248387at2759"/>
<dbReference type="Proteomes" id="UP000186698">
    <property type="component" value="Chromosome 5L"/>
</dbReference>
<dbReference type="Bgee" id="100381109">
    <property type="expression patterns" value="Expressed in ovary and 19 other cell types or tissues"/>
</dbReference>
<dbReference type="GO" id="GO:0005856">
    <property type="term" value="C:cytoskeleton"/>
    <property type="evidence" value="ECO:0000318"/>
    <property type="project" value="GO_Central"/>
</dbReference>
<dbReference type="GO" id="GO:0005829">
    <property type="term" value="C:cytosol"/>
    <property type="evidence" value="ECO:0007669"/>
    <property type="project" value="UniProtKB-SubCell"/>
</dbReference>
<dbReference type="GO" id="GO:0005794">
    <property type="term" value="C:Golgi apparatus"/>
    <property type="evidence" value="ECO:0000318"/>
    <property type="project" value="GO_Central"/>
</dbReference>
<dbReference type="GO" id="GO:0004252">
    <property type="term" value="F:serine-type endopeptidase activity"/>
    <property type="evidence" value="ECO:0007669"/>
    <property type="project" value="InterPro"/>
</dbReference>
<dbReference type="GO" id="GO:0006508">
    <property type="term" value="P:proteolysis"/>
    <property type="evidence" value="ECO:0007669"/>
    <property type="project" value="UniProtKB-KW"/>
</dbReference>
<dbReference type="FunFam" id="2.130.10.120:FF:000002">
    <property type="entry name" value="prolyl endopeptidase-like isoform X1"/>
    <property type="match status" value="1"/>
</dbReference>
<dbReference type="FunFam" id="3.40.50.1820:FF:000050">
    <property type="entry name" value="prolyl endopeptidase-like isoform X2"/>
    <property type="match status" value="1"/>
</dbReference>
<dbReference type="Gene3D" id="3.40.50.1820">
    <property type="entry name" value="alpha/beta hydrolase"/>
    <property type="match status" value="1"/>
</dbReference>
<dbReference type="Gene3D" id="2.130.10.120">
    <property type="entry name" value="Prolyl oligopeptidase, N-terminal domain"/>
    <property type="match status" value="1"/>
</dbReference>
<dbReference type="InterPro" id="IPR029058">
    <property type="entry name" value="AB_hydrolase_fold"/>
</dbReference>
<dbReference type="InterPro" id="IPR023302">
    <property type="entry name" value="Pept_S9A_N"/>
</dbReference>
<dbReference type="InterPro" id="IPR001375">
    <property type="entry name" value="Peptidase_S9_cat"/>
</dbReference>
<dbReference type="InterPro" id="IPR002470">
    <property type="entry name" value="Peptidase_S9A"/>
</dbReference>
<dbReference type="InterPro" id="IPR051543">
    <property type="entry name" value="Serine_Peptidase_S9A"/>
</dbReference>
<dbReference type="PANTHER" id="PTHR11757:SF19">
    <property type="entry name" value="PROLYL ENDOPEPTIDASE-LIKE"/>
    <property type="match status" value="1"/>
</dbReference>
<dbReference type="PANTHER" id="PTHR11757">
    <property type="entry name" value="PROTEASE FAMILY S9A OLIGOPEPTIDASE"/>
    <property type="match status" value="1"/>
</dbReference>
<dbReference type="Pfam" id="PF00326">
    <property type="entry name" value="Peptidase_S9"/>
    <property type="match status" value="1"/>
</dbReference>
<dbReference type="Pfam" id="PF02897">
    <property type="entry name" value="Peptidase_S9_N"/>
    <property type="match status" value="1"/>
</dbReference>
<dbReference type="PRINTS" id="PR00862">
    <property type="entry name" value="PROLIGOPTASE"/>
</dbReference>
<dbReference type="SUPFAM" id="SSF53474">
    <property type="entry name" value="alpha/beta-Hydrolases"/>
    <property type="match status" value="1"/>
</dbReference>
<dbReference type="SUPFAM" id="SSF50993">
    <property type="entry name" value="Peptidase/esterase 'gauge' domain"/>
    <property type="match status" value="1"/>
</dbReference>
<gene>
    <name type="primary">prepl</name>
</gene>
<feature type="chain" id="PRO_0000314866" description="Prolyl endopeptidase-like">
    <location>
        <begin position="1"/>
        <end position="707"/>
    </location>
</feature>
<feature type="active site" description="Charge relay system" evidence="1">
    <location>
        <position position="538"/>
    </location>
</feature>
<feature type="active site" description="Charge relay system" evidence="1">
    <location>
        <position position="624"/>
    </location>
</feature>
<feature type="active site" description="Charge relay system" evidence="1">
    <location>
        <position position="670"/>
    </location>
</feature>
<name>PPCEL_XENLA</name>
<evidence type="ECO:0000250" key="1">
    <source>
        <dbReference type="UniProtKB" id="Q4J6C6"/>
    </source>
</evidence>
<evidence type="ECO:0000250" key="2">
    <source>
        <dbReference type="UniProtKB" id="Q8C167"/>
    </source>
</evidence>
<evidence type="ECO:0000305" key="3"/>
<proteinExistence type="evidence at transcript level"/>
<protein>
    <recommendedName>
        <fullName>Prolyl endopeptidase-like</fullName>
        <ecNumber evidence="2">3.4.21.-</ecNumber>
    </recommendedName>
    <alternativeName>
        <fullName>Prolylendopeptidase-like</fullName>
    </alternativeName>
</protein>
<accession>Q32N48</accession>
<comment type="function">
    <text evidence="1">Serine peptidase whose precise substrate specificity remains unclear (By similarity). Does not cleave peptides after a arginine or lysine residue (By similarity). Regulates trans-Golgi network morphology and sorting by regulating the membrane binding of the AP-1 complex (By similarity). May play a role in the regulation of synaptic vesicle exocytosis (By similarity).</text>
</comment>
<comment type="subunit">
    <text evidence="1">Homodimer.</text>
</comment>
<comment type="subcellular location">
    <subcellularLocation>
        <location evidence="1">Cytoplasm</location>
        <location evidence="1">Cytosol</location>
    </subcellularLocation>
</comment>
<comment type="similarity">
    <text evidence="3">Belongs to the peptidase S9A family.</text>
</comment>
<reference key="1">
    <citation type="submission" date="2005-11" db="EMBL/GenBank/DDBJ databases">
        <authorList>
            <consortium name="NIH - Xenopus Gene Collection (XGC) project"/>
        </authorList>
    </citation>
    <scope>NUCLEOTIDE SEQUENCE [LARGE SCALE MRNA]</scope>
    <source>
        <tissue>Ovary</tissue>
    </source>
</reference>